<accession>Q3K2N4</accession>
<evidence type="ECO:0000255" key="1">
    <source>
        <dbReference type="HAMAP-Rule" id="MF_02002"/>
    </source>
</evidence>
<proteinExistence type="inferred from homology"/>
<organism>
    <name type="scientific">Streptococcus agalactiae serotype Ia (strain ATCC 27591 / A909 / CDC SS700)</name>
    <dbReference type="NCBI Taxonomy" id="205921"/>
    <lineage>
        <taxon>Bacteria</taxon>
        <taxon>Bacillati</taxon>
        <taxon>Bacillota</taxon>
        <taxon>Bacilli</taxon>
        <taxon>Lactobacillales</taxon>
        <taxon>Streptococcaceae</taxon>
        <taxon>Streptococcus</taxon>
    </lineage>
</organism>
<sequence>MKLKETLNLGQTAFPMRAGLPNKEPQWQEAWDQADIYKKRQALNEGKPAFHLHDGPPYANGNIHVGHALNKISKDIIVRSKSMSGFRAPYVPGWDTHGLPIEQVLAKKGVKRKEMDLAEYLEMCRDYALSQVDKQRDDFKRLGVSADWENPYITLTPDYEADQVRVFGAMADKGYIYRGAKPVYWSWSSESALAEAEIEYHDIDSTSLYYANKVKDGKGILDTDTYIVVWTTTPFTVTASRGLTVGPDMEYVVVVPVGSERKYLLAEVLVDSLAAKFGWENFEIVTHHTGKELNHIVTEHPWDTEVEELVILGDHVTTDSGTGIVHTAPGFGEDDYNVGIANGLDVVVTVDSRGLMMENAGPDFEGQFYDKVTPLVKEKLGDLLLASEVINHSYPFDWRTKKPIIWRAVPQWFASVSKFRQEILDEIEKTNFQPEWGKKRLYNMIRDRGDWVISRQRAWGVPLPIFYAEDGTAIMTKEVTDHVADLFAEYGSIVWWQRDAKDLLPAGYTHPGSPNGLFEKETDIMDVWFDSGSSWNGVMNARENLSYPADLYLEGSDQYRGWFNSSLITSVAVNGHAPYKAVLSQGFVLDGKGEKMSKSLGNTILPSDVEKQFGAEILRLWVTSVDSSNDVRISMDILKQTSETYRKIRNTLRFLIANTSDFNPKQDAVAYENLGAVDRYMTIKFNQVVDTINKAYAAYDFMAIYKAVVNFVTVDLSAFYLDFAKDVVYIEAANSPERRRMQTVFYDILVKLTKLLTPILPHTAEEIWSYLEHEEEEFVQLAEMPVAQTFSGQEEILEEWSAFMTLRTQAQKALEEARNAKVIGKSLEAHLTIYASQEVKTLLTALNSDIALLMIVSQLTIADEADKPADSVSFEGVAFTVEHAEGEVCERSRRIDPTTKMRSYGVAVCDASAAIIEQYYPEAVAQGFEA</sequence>
<comment type="function">
    <text evidence="1">Catalyzes the attachment of isoleucine to tRNA(Ile). As IleRS can inadvertently accommodate and process structurally similar amino acids such as valine, to avoid such errors it has two additional distinct tRNA(Ile)-dependent editing activities. One activity is designated as 'pretransfer' editing and involves the hydrolysis of activated Val-AMP. The other activity is designated 'posttransfer' editing and involves deacylation of mischarged Val-tRNA(Ile).</text>
</comment>
<comment type="catalytic activity">
    <reaction evidence="1">
        <text>tRNA(Ile) + L-isoleucine + ATP = L-isoleucyl-tRNA(Ile) + AMP + diphosphate</text>
        <dbReference type="Rhea" id="RHEA:11060"/>
        <dbReference type="Rhea" id="RHEA-COMP:9666"/>
        <dbReference type="Rhea" id="RHEA-COMP:9695"/>
        <dbReference type="ChEBI" id="CHEBI:30616"/>
        <dbReference type="ChEBI" id="CHEBI:33019"/>
        <dbReference type="ChEBI" id="CHEBI:58045"/>
        <dbReference type="ChEBI" id="CHEBI:78442"/>
        <dbReference type="ChEBI" id="CHEBI:78528"/>
        <dbReference type="ChEBI" id="CHEBI:456215"/>
        <dbReference type="EC" id="6.1.1.5"/>
    </reaction>
</comment>
<comment type="subunit">
    <text evidence="1">Monomer.</text>
</comment>
<comment type="subcellular location">
    <subcellularLocation>
        <location evidence="1">Cytoplasm</location>
    </subcellularLocation>
</comment>
<comment type="domain">
    <text evidence="1">IleRS has two distinct active sites: one for aminoacylation and one for editing. The misactivated valine is translocated from the active site to the editing site, which sterically excludes the correctly activated isoleucine. The single editing site contains two valyl binding pockets, one specific for each substrate (Val-AMP or Val-tRNA(Ile)).</text>
</comment>
<comment type="similarity">
    <text evidence="1">Belongs to the class-I aminoacyl-tRNA synthetase family. IleS type 1 subfamily.</text>
</comment>
<reference key="1">
    <citation type="journal article" date="2005" name="Proc. Natl. Acad. Sci. U.S.A.">
        <title>Genome analysis of multiple pathogenic isolates of Streptococcus agalactiae: implications for the microbial 'pan-genome'.</title>
        <authorList>
            <person name="Tettelin H."/>
            <person name="Masignani V."/>
            <person name="Cieslewicz M.J."/>
            <person name="Donati C."/>
            <person name="Medini D."/>
            <person name="Ward N.L."/>
            <person name="Angiuoli S.V."/>
            <person name="Crabtree J."/>
            <person name="Jones A.L."/>
            <person name="Durkin A.S."/>
            <person name="DeBoy R.T."/>
            <person name="Davidsen T.M."/>
            <person name="Mora M."/>
            <person name="Scarselli M."/>
            <person name="Margarit y Ros I."/>
            <person name="Peterson J.D."/>
            <person name="Hauser C.R."/>
            <person name="Sundaram J.P."/>
            <person name="Nelson W.C."/>
            <person name="Madupu R."/>
            <person name="Brinkac L.M."/>
            <person name="Dodson R.J."/>
            <person name="Rosovitz M.J."/>
            <person name="Sullivan S.A."/>
            <person name="Daugherty S.C."/>
            <person name="Haft D.H."/>
            <person name="Selengut J."/>
            <person name="Gwinn M.L."/>
            <person name="Zhou L."/>
            <person name="Zafar N."/>
            <person name="Khouri H."/>
            <person name="Radune D."/>
            <person name="Dimitrov G."/>
            <person name="Watkins K."/>
            <person name="O'Connor K.J."/>
            <person name="Smith S."/>
            <person name="Utterback T.R."/>
            <person name="White O."/>
            <person name="Rubens C.E."/>
            <person name="Grandi G."/>
            <person name="Madoff L.C."/>
            <person name="Kasper D.L."/>
            <person name="Telford J.L."/>
            <person name="Wessels M.R."/>
            <person name="Rappuoli R."/>
            <person name="Fraser C.M."/>
        </authorList>
    </citation>
    <scope>NUCLEOTIDE SEQUENCE [LARGE SCALE GENOMIC DNA]</scope>
    <source>
        <strain>ATCC 27591 / A909 / CDC SS700</strain>
    </source>
</reference>
<gene>
    <name evidence="1" type="primary">ileS</name>
    <name type="ordered locus">SAK_0587</name>
</gene>
<feature type="chain" id="PRO_0000098475" description="Isoleucine--tRNA ligase">
    <location>
        <begin position="1"/>
        <end position="930"/>
    </location>
</feature>
<feature type="short sequence motif" description="'HIGH' region">
    <location>
        <begin position="57"/>
        <end position="67"/>
    </location>
</feature>
<feature type="short sequence motif" description="'KMSKS' region">
    <location>
        <begin position="595"/>
        <end position="599"/>
    </location>
</feature>
<feature type="binding site" evidence="1">
    <location>
        <position position="554"/>
    </location>
    <ligand>
        <name>L-isoleucyl-5'-AMP</name>
        <dbReference type="ChEBI" id="CHEBI:178002"/>
    </ligand>
</feature>
<feature type="binding site" evidence="1">
    <location>
        <position position="598"/>
    </location>
    <ligand>
        <name>ATP</name>
        <dbReference type="ChEBI" id="CHEBI:30616"/>
    </ligand>
</feature>
<dbReference type="EC" id="6.1.1.5" evidence="1"/>
<dbReference type="EMBL" id="CP000114">
    <property type="protein sequence ID" value="ABA45845.1"/>
    <property type="molecule type" value="Genomic_DNA"/>
</dbReference>
<dbReference type="RefSeq" id="WP_000768163.1">
    <property type="nucleotide sequence ID" value="NC_007432.1"/>
</dbReference>
<dbReference type="SMR" id="Q3K2N4"/>
<dbReference type="KEGG" id="sak:SAK_0587"/>
<dbReference type="HOGENOM" id="CLU_001493_7_0_9"/>
<dbReference type="GO" id="GO:0005829">
    <property type="term" value="C:cytosol"/>
    <property type="evidence" value="ECO:0007669"/>
    <property type="project" value="TreeGrafter"/>
</dbReference>
<dbReference type="GO" id="GO:0002161">
    <property type="term" value="F:aminoacyl-tRNA deacylase activity"/>
    <property type="evidence" value="ECO:0007669"/>
    <property type="project" value="InterPro"/>
</dbReference>
<dbReference type="GO" id="GO:0005524">
    <property type="term" value="F:ATP binding"/>
    <property type="evidence" value="ECO:0007669"/>
    <property type="project" value="UniProtKB-UniRule"/>
</dbReference>
<dbReference type="GO" id="GO:0004822">
    <property type="term" value="F:isoleucine-tRNA ligase activity"/>
    <property type="evidence" value="ECO:0007669"/>
    <property type="project" value="UniProtKB-UniRule"/>
</dbReference>
<dbReference type="GO" id="GO:0000049">
    <property type="term" value="F:tRNA binding"/>
    <property type="evidence" value="ECO:0007669"/>
    <property type="project" value="InterPro"/>
</dbReference>
<dbReference type="GO" id="GO:0006428">
    <property type="term" value="P:isoleucyl-tRNA aminoacylation"/>
    <property type="evidence" value="ECO:0007669"/>
    <property type="project" value="UniProtKB-UniRule"/>
</dbReference>
<dbReference type="CDD" id="cd07960">
    <property type="entry name" value="Anticodon_Ia_Ile_BEm"/>
    <property type="match status" value="1"/>
</dbReference>
<dbReference type="CDD" id="cd00818">
    <property type="entry name" value="IleRS_core"/>
    <property type="match status" value="1"/>
</dbReference>
<dbReference type="FunFam" id="1.10.10.830:FF:000001">
    <property type="entry name" value="Isoleucine--tRNA ligase"/>
    <property type="match status" value="1"/>
</dbReference>
<dbReference type="FunFam" id="1.10.730.20:FF:000001">
    <property type="entry name" value="Isoleucine--tRNA ligase"/>
    <property type="match status" value="1"/>
</dbReference>
<dbReference type="FunFam" id="3.40.50.620:FF:000092">
    <property type="entry name" value="Isoleucine--tRNA ligase"/>
    <property type="match status" value="1"/>
</dbReference>
<dbReference type="FunFam" id="3.90.740.10:FF:000006">
    <property type="entry name" value="Isoleucine--tRNA ligase"/>
    <property type="match status" value="1"/>
</dbReference>
<dbReference type="Gene3D" id="1.10.730.20">
    <property type="match status" value="1"/>
</dbReference>
<dbReference type="Gene3D" id="3.40.50.620">
    <property type="entry name" value="HUPs"/>
    <property type="match status" value="2"/>
</dbReference>
<dbReference type="Gene3D" id="1.10.10.830">
    <property type="entry name" value="Ile-tRNA synthetase CP2 domain-like"/>
    <property type="match status" value="1"/>
</dbReference>
<dbReference type="HAMAP" id="MF_02002">
    <property type="entry name" value="Ile_tRNA_synth_type1"/>
    <property type="match status" value="1"/>
</dbReference>
<dbReference type="InterPro" id="IPR001412">
    <property type="entry name" value="aa-tRNA-synth_I_CS"/>
</dbReference>
<dbReference type="InterPro" id="IPR002300">
    <property type="entry name" value="aa-tRNA-synth_Ia"/>
</dbReference>
<dbReference type="InterPro" id="IPR033708">
    <property type="entry name" value="Anticodon_Ile_BEm"/>
</dbReference>
<dbReference type="InterPro" id="IPR002301">
    <property type="entry name" value="Ile-tRNA-ligase"/>
</dbReference>
<dbReference type="InterPro" id="IPR023585">
    <property type="entry name" value="Ile-tRNA-ligase_type1"/>
</dbReference>
<dbReference type="InterPro" id="IPR050081">
    <property type="entry name" value="Ile-tRNA_ligase"/>
</dbReference>
<dbReference type="InterPro" id="IPR013155">
    <property type="entry name" value="M/V/L/I-tRNA-synth_anticd-bd"/>
</dbReference>
<dbReference type="InterPro" id="IPR014729">
    <property type="entry name" value="Rossmann-like_a/b/a_fold"/>
</dbReference>
<dbReference type="InterPro" id="IPR009080">
    <property type="entry name" value="tRNAsynth_Ia_anticodon-bd"/>
</dbReference>
<dbReference type="InterPro" id="IPR009008">
    <property type="entry name" value="Val/Leu/Ile-tRNA-synth_edit"/>
</dbReference>
<dbReference type="NCBIfam" id="TIGR00392">
    <property type="entry name" value="ileS"/>
    <property type="match status" value="1"/>
</dbReference>
<dbReference type="PANTHER" id="PTHR42765:SF1">
    <property type="entry name" value="ISOLEUCINE--TRNA LIGASE, MITOCHONDRIAL"/>
    <property type="match status" value="1"/>
</dbReference>
<dbReference type="PANTHER" id="PTHR42765">
    <property type="entry name" value="SOLEUCYL-TRNA SYNTHETASE"/>
    <property type="match status" value="1"/>
</dbReference>
<dbReference type="Pfam" id="PF08264">
    <property type="entry name" value="Anticodon_1"/>
    <property type="match status" value="1"/>
</dbReference>
<dbReference type="Pfam" id="PF00133">
    <property type="entry name" value="tRNA-synt_1"/>
    <property type="match status" value="1"/>
</dbReference>
<dbReference type="PRINTS" id="PR00984">
    <property type="entry name" value="TRNASYNTHILE"/>
</dbReference>
<dbReference type="SUPFAM" id="SSF47323">
    <property type="entry name" value="Anticodon-binding domain of a subclass of class I aminoacyl-tRNA synthetases"/>
    <property type="match status" value="1"/>
</dbReference>
<dbReference type="SUPFAM" id="SSF52374">
    <property type="entry name" value="Nucleotidylyl transferase"/>
    <property type="match status" value="1"/>
</dbReference>
<dbReference type="SUPFAM" id="SSF50677">
    <property type="entry name" value="ValRS/IleRS/LeuRS editing domain"/>
    <property type="match status" value="1"/>
</dbReference>
<dbReference type="PROSITE" id="PS00178">
    <property type="entry name" value="AA_TRNA_LIGASE_I"/>
    <property type="match status" value="1"/>
</dbReference>
<protein>
    <recommendedName>
        <fullName evidence="1">Isoleucine--tRNA ligase</fullName>
        <ecNumber evidence="1">6.1.1.5</ecNumber>
    </recommendedName>
    <alternativeName>
        <fullName evidence="1">Isoleucyl-tRNA synthetase</fullName>
        <shortName evidence="1">IleRS</shortName>
    </alternativeName>
</protein>
<keyword id="KW-0030">Aminoacyl-tRNA synthetase</keyword>
<keyword id="KW-0067">ATP-binding</keyword>
<keyword id="KW-0963">Cytoplasm</keyword>
<keyword id="KW-0436">Ligase</keyword>
<keyword id="KW-0547">Nucleotide-binding</keyword>
<keyword id="KW-0648">Protein biosynthesis</keyword>
<name>SYI_STRA1</name>